<proteinExistence type="inferred from homology"/>
<protein>
    <recommendedName>
        <fullName>TATA-box-binding protein</fullName>
    </recommendedName>
    <alternativeName>
        <fullName>Box A-binding protein</fullName>
        <shortName>BAP</shortName>
    </alternativeName>
    <alternativeName>
        <fullName>TATA sequence-binding protein</fullName>
        <shortName>TBP</shortName>
    </alternativeName>
    <alternativeName>
        <fullName>TATA-box factor</fullName>
    </alternativeName>
    <alternativeName>
        <fullName>aTBP</fullName>
    </alternativeName>
</protein>
<gene>
    <name type="primary">tbp</name>
</gene>
<comment type="function">
    <text evidence="1">General factor that plays a role in the activation of archaeal genes transcribed by RNA polymerase. Binds specifically to the TATA box promoter element which lies close to the position of transcription initiation (By similarity).</text>
</comment>
<comment type="similarity">
    <text evidence="2">Belongs to the TBP family.</text>
</comment>
<feature type="chain" id="PRO_0000154015" description="TATA-box-binding protein">
    <location>
        <begin position="1"/>
        <end position="181"/>
    </location>
</feature>
<feature type="repeat" description="1">
    <location>
        <begin position="7"/>
        <end position="83"/>
    </location>
</feature>
<feature type="repeat" description="2">
    <location>
        <begin position="98"/>
        <end position="173"/>
    </location>
</feature>
<reference key="1">
    <citation type="journal article" date="2000" name="J. Biol. Chem.">
        <title>Transcription factor S, a cleavage induction factor of the archaeal RNA polymerase.</title>
        <authorList>
            <person name="Hausner W."/>
            <person name="Lange U."/>
            <person name="Musfeldt M."/>
        </authorList>
    </citation>
    <scope>NUCLEOTIDE SEQUENCE [GENOMIC DNA]</scope>
</reference>
<accession>Q9P9I9</accession>
<sequence length="181" mass="20008">MEPEIKIVNVVVSTQIGTDIDLEYAADILDNAEYEPEQFPGLVCRLSDPKVALLIFRSGKLNCTGAKSKEDAEIAIKKIIKELKDAGMDIIDNPEVNVQNMVATADLGIEPNLDDISTLEGTEYEPEQFPGLVYRLSDPKVVVLIFGSGKVVITGLKKKDDAYLALDKILSTLKELEEEYY</sequence>
<evidence type="ECO:0000250" key="1"/>
<evidence type="ECO:0000305" key="2"/>
<organism>
    <name type="scientific">Methanothermococcus thermolithotrophicus</name>
    <name type="common">Methanococcus thermolithotrophicus</name>
    <dbReference type="NCBI Taxonomy" id="2186"/>
    <lineage>
        <taxon>Archaea</taxon>
        <taxon>Methanobacteriati</taxon>
        <taxon>Methanobacteriota</taxon>
        <taxon>Methanomada group</taxon>
        <taxon>Methanococci</taxon>
        <taxon>Methanococcales</taxon>
        <taxon>Methanococcaceae</taxon>
        <taxon>Methanothermococcus</taxon>
    </lineage>
</organism>
<name>TBP_METTL</name>
<keyword id="KW-0238">DNA-binding</keyword>
<keyword id="KW-0677">Repeat</keyword>
<keyword id="KW-0804">Transcription</keyword>
<keyword id="KW-0805">Transcription regulation</keyword>
<dbReference type="EMBL" id="AJ271331">
    <property type="protein sequence ID" value="CAB66385.1"/>
    <property type="molecule type" value="Genomic_DNA"/>
</dbReference>
<dbReference type="SMR" id="Q9P9I9"/>
<dbReference type="GO" id="GO:0003677">
    <property type="term" value="F:DNA binding"/>
    <property type="evidence" value="ECO:0007669"/>
    <property type="project" value="UniProtKB-KW"/>
</dbReference>
<dbReference type="GO" id="GO:0003700">
    <property type="term" value="F:DNA-binding transcription factor activity"/>
    <property type="evidence" value="ECO:0007669"/>
    <property type="project" value="UniProtKB-UniRule"/>
</dbReference>
<dbReference type="GO" id="GO:0006352">
    <property type="term" value="P:DNA-templated transcription initiation"/>
    <property type="evidence" value="ECO:0007669"/>
    <property type="project" value="InterPro"/>
</dbReference>
<dbReference type="CDD" id="cd04518">
    <property type="entry name" value="TBP_archaea"/>
    <property type="match status" value="1"/>
</dbReference>
<dbReference type="FunFam" id="3.30.310.10:FF:000007">
    <property type="entry name" value="TATA-box-binding protein"/>
    <property type="match status" value="1"/>
</dbReference>
<dbReference type="FunFam" id="3.30.310.10:FF:000010">
    <property type="entry name" value="TATA-box-binding protein"/>
    <property type="match status" value="1"/>
</dbReference>
<dbReference type="Gene3D" id="3.30.310.10">
    <property type="entry name" value="TATA-Binding Protein"/>
    <property type="match status" value="2"/>
</dbReference>
<dbReference type="HAMAP" id="MF_00408">
    <property type="entry name" value="TATA_bind_prot_arch"/>
    <property type="match status" value="1"/>
</dbReference>
<dbReference type="InterPro" id="IPR000814">
    <property type="entry name" value="TBP"/>
</dbReference>
<dbReference type="InterPro" id="IPR033711">
    <property type="entry name" value="TBP_archaea"/>
</dbReference>
<dbReference type="InterPro" id="IPR030491">
    <property type="entry name" value="TBP_CS"/>
</dbReference>
<dbReference type="InterPro" id="IPR012295">
    <property type="entry name" value="TBP_dom_sf"/>
</dbReference>
<dbReference type="NCBIfam" id="NF001593">
    <property type="entry name" value="PRK00394.1-2"/>
    <property type="match status" value="1"/>
</dbReference>
<dbReference type="NCBIfam" id="NF001594">
    <property type="entry name" value="PRK00394.1-3"/>
    <property type="match status" value="1"/>
</dbReference>
<dbReference type="PANTHER" id="PTHR10126">
    <property type="entry name" value="TATA-BOX BINDING PROTEIN"/>
    <property type="match status" value="1"/>
</dbReference>
<dbReference type="Pfam" id="PF00352">
    <property type="entry name" value="TBP"/>
    <property type="match status" value="2"/>
</dbReference>
<dbReference type="PRINTS" id="PR00686">
    <property type="entry name" value="TIFACTORIID"/>
</dbReference>
<dbReference type="SUPFAM" id="SSF55945">
    <property type="entry name" value="TATA-box binding protein-like"/>
    <property type="match status" value="2"/>
</dbReference>
<dbReference type="PROSITE" id="PS00351">
    <property type="entry name" value="TFIID"/>
    <property type="match status" value="2"/>
</dbReference>